<protein>
    <recommendedName>
        <fullName evidence="1">DNA mismatch repair protein MutS</fullName>
    </recommendedName>
</protein>
<organism>
    <name type="scientific">Brucella abortus (strain 2308)</name>
    <dbReference type="NCBI Taxonomy" id="359391"/>
    <lineage>
        <taxon>Bacteria</taxon>
        <taxon>Pseudomonadati</taxon>
        <taxon>Pseudomonadota</taxon>
        <taxon>Alphaproteobacteria</taxon>
        <taxon>Hyphomicrobiales</taxon>
        <taxon>Brucellaceae</taxon>
        <taxon>Brucella/Ochrobactrum group</taxon>
        <taxon>Brucella</taxon>
    </lineage>
</organism>
<keyword id="KW-0067">ATP-binding</keyword>
<keyword id="KW-0227">DNA damage</keyword>
<keyword id="KW-0234">DNA repair</keyword>
<keyword id="KW-0238">DNA-binding</keyword>
<keyword id="KW-0547">Nucleotide-binding</keyword>
<keyword id="KW-1185">Reference proteome</keyword>
<gene>
    <name evidence="1" type="primary">mutS</name>
    <name type="ordered locus">BAB1_0146</name>
</gene>
<name>MUTS_BRUA2</name>
<reference key="1">
    <citation type="journal article" date="2005" name="Infect. Immun.">
        <title>Whole-genome analyses of speciation events in pathogenic Brucellae.</title>
        <authorList>
            <person name="Chain P.S."/>
            <person name="Comerci D.J."/>
            <person name="Tolmasky M.E."/>
            <person name="Larimer F.W."/>
            <person name="Malfatti S.A."/>
            <person name="Vergez L.M."/>
            <person name="Aguero F."/>
            <person name="Land M.L."/>
            <person name="Ugalde R.A."/>
            <person name="Garcia E."/>
        </authorList>
    </citation>
    <scope>NUCLEOTIDE SEQUENCE [LARGE SCALE GENOMIC DNA]</scope>
    <source>
        <strain>2308</strain>
    </source>
</reference>
<evidence type="ECO:0000255" key="1">
    <source>
        <dbReference type="HAMAP-Rule" id="MF_00096"/>
    </source>
</evidence>
<evidence type="ECO:0000256" key="2">
    <source>
        <dbReference type="SAM" id="MobiDB-lite"/>
    </source>
</evidence>
<accession>Q2YNZ0</accession>
<comment type="function">
    <text evidence="1">This protein is involved in the repair of mismatches in DNA. It is possible that it carries out the mismatch recognition step. This protein has a weak ATPase activity.</text>
</comment>
<comment type="similarity">
    <text evidence="1">Belongs to the DNA mismatch repair MutS family.</text>
</comment>
<sequence>MEAKVEEKEPEPVENAGPDAPVRLTPMMEQYIEIKAANVDSLLFYRMGDFYELFFDDAVAASAALGITLTKRGKHLGEDIPMCGVPVHAADDYLQKLIAKGYRVAVCEQVEDPAEAKKRGSKSVVKRDVIRLVTPGTLTEEKLLDPAQANFLMAMGRTRGDGALALVWIDISTGTFRVAETTPDRLFADIMRVDPRELVVADSAFHDEELRPVFDLIGKAVTPQPATLFDSAAAQTRIQHYFNVATLDGFGQFSRPELSAISGAIAYIEKTQISERPPLMRPEREHEGGTLFIDPATRASLELARTMSGNRDGSLLKAIDRTVTGGGARLLAERLTAPLTSPKEIALRLDSVSWCLSEQTLCEALRLELKGVPDMPRALSRLAVGRGGPRDLGALACGFEAAGGIASLLDGALLPDELAAAREAIEKMPAGFAAHLDRALADELPLLKRDGGFVREGYNSELDEMRALRDQSRRVIAGLQADYIEETGIKSLKIKHNNVLGYFIEVTANNSGAMTDTDEAKSRFIHRQTMANAMRFTTTELAELESKIANAADRALSIELAIFEELTAEAVAHADSIRAAASALSVFDVSTALAVLAEEQGYCRPHVDDSLSFNIVAGRHPVVEQALRRQAANPFVANDCDLSPQRDGGDGAIWLLTGPNMGGKSTFLRQNALIAILAQMGSFVPAGSAHIGVVDRLFSRVGASDDLARGRSTFMVEMVETAAILNQAGEHSLVILDEIGRGTATFDGLSIAWAAVEYLHEKNRCRALFATHFHEMTALSEKLERLSNVTMRVKEWDNDVIFLHEVAKGAADRSYGVQVARLAGLPEAVVNRARDVLHQLEAGETSGKADRLIDDLPLFSVMLQQEKPKPQIQAKDSELANAVAAISPDELTPREALDLIYKLKELAGKA</sequence>
<feature type="chain" id="PRO_0000335122" description="DNA mismatch repair protein MutS">
    <location>
        <begin position="1"/>
        <end position="910"/>
    </location>
</feature>
<feature type="region of interest" description="Disordered" evidence="2">
    <location>
        <begin position="1"/>
        <end position="21"/>
    </location>
</feature>
<feature type="compositionally biased region" description="Basic and acidic residues" evidence="2">
    <location>
        <begin position="1"/>
        <end position="11"/>
    </location>
</feature>
<feature type="binding site" evidence="1">
    <location>
        <begin position="658"/>
        <end position="665"/>
    </location>
    <ligand>
        <name>ATP</name>
        <dbReference type="ChEBI" id="CHEBI:30616"/>
    </ligand>
</feature>
<dbReference type="EMBL" id="AM040264">
    <property type="protein sequence ID" value="CAJ10102.1"/>
    <property type="molecule type" value="Genomic_DNA"/>
</dbReference>
<dbReference type="RefSeq" id="WP_002965395.1">
    <property type="nucleotide sequence ID" value="NZ_KN046823.1"/>
</dbReference>
<dbReference type="SMR" id="Q2YNZ0"/>
<dbReference type="STRING" id="359391.BAB1_0146"/>
<dbReference type="GeneID" id="93017383"/>
<dbReference type="KEGG" id="bmf:BAB1_0146"/>
<dbReference type="PATRIC" id="fig|359391.11.peg.1569"/>
<dbReference type="HOGENOM" id="CLU_002472_3_1_5"/>
<dbReference type="PhylomeDB" id="Q2YNZ0"/>
<dbReference type="Proteomes" id="UP000002719">
    <property type="component" value="Chromosome I"/>
</dbReference>
<dbReference type="GO" id="GO:0005829">
    <property type="term" value="C:cytosol"/>
    <property type="evidence" value="ECO:0007669"/>
    <property type="project" value="TreeGrafter"/>
</dbReference>
<dbReference type="GO" id="GO:0005524">
    <property type="term" value="F:ATP binding"/>
    <property type="evidence" value="ECO:0007669"/>
    <property type="project" value="UniProtKB-UniRule"/>
</dbReference>
<dbReference type="GO" id="GO:0140664">
    <property type="term" value="F:ATP-dependent DNA damage sensor activity"/>
    <property type="evidence" value="ECO:0007669"/>
    <property type="project" value="InterPro"/>
</dbReference>
<dbReference type="GO" id="GO:0003684">
    <property type="term" value="F:damaged DNA binding"/>
    <property type="evidence" value="ECO:0007669"/>
    <property type="project" value="UniProtKB-UniRule"/>
</dbReference>
<dbReference type="GO" id="GO:0030983">
    <property type="term" value="F:mismatched DNA binding"/>
    <property type="evidence" value="ECO:0007669"/>
    <property type="project" value="InterPro"/>
</dbReference>
<dbReference type="GO" id="GO:0006298">
    <property type="term" value="P:mismatch repair"/>
    <property type="evidence" value="ECO:0007669"/>
    <property type="project" value="UniProtKB-UniRule"/>
</dbReference>
<dbReference type="CDD" id="cd03284">
    <property type="entry name" value="ABC_MutS1"/>
    <property type="match status" value="1"/>
</dbReference>
<dbReference type="FunFam" id="3.40.1170.10:FF:000001">
    <property type="entry name" value="DNA mismatch repair protein MutS"/>
    <property type="match status" value="1"/>
</dbReference>
<dbReference type="FunFam" id="3.40.50.300:FF:000870">
    <property type="entry name" value="MutS protein homolog 4"/>
    <property type="match status" value="1"/>
</dbReference>
<dbReference type="Gene3D" id="1.10.1420.10">
    <property type="match status" value="2"/>
</dbReference>
<dbReference type="Gene3D" id="6.10.140.430">
    <property type="match status" value="1"/>
</dbReference>
<dbReference type="Gene3D" id="3.40.1170.10">
    <property type="entry name" value="DNA repair protein MutS, domain I"/>
    <property type="match status" value="1"/>
</dbReference>
<dbReference type="Gene3D" id="3.30.420.110">
    <property type="entry name" value="MutS, connector domain"/>
    <property type="match status" value="1"/>
</dbReference>
<dbReference type="Gene3D" id="3.40.50.300">
    <property type="entry name" value="P-loop containing nucleotide triphosphate hydrolases"/>
    <property type="match status" value="1"/>
</dbReference>
<dbReference type="HAMAP" id="MF_00096">
    <property type="entry name" value="MutS"/>
    <property type="match status" value="1"/>
</dbReference>
<dbReference type="InterPro" id="IPR005748">
    <property type="entry name" value="DNA_mismatch_repair_MutS"/>
</dbReference>
<dbReference type="InterPro" id="IPR007695">
    <property type="entry name" value="DNA_mismatch_repair_MutS-lik_N"/>
</dbReference>
<dbReference type="InterPro" id="IPR017261">
    <property type="entry name" value="DNA_mismatch_repair_MutS/MSH"/>
</dbReference>
<dbReference type="InterPro" id="IPR000432">
    <property type="entry name" value="DNA_mismatch_repair_MutS_C"/>
</dbReference>
<dbReference type="InterPro" id="IPR007861">
    <property type="entry name" value="DNA_mismatch_repair_MutS_clamp"/>
</dbReference>
<dbReference type="InterPro" id="IPR007696">
    <property type="entry name" value="DNA_mismatch_repair_MutS_core"/>
</dbReference>
<dbReference type="InterPro" id="IPR016151">
    <property type="entry name" value="DNA_mismatch_repair_MutS_N"/>
</dbReference>
<dbReference type="InterPro" id="IPR036187">
    <property type="entry name" value="DNA_mismatch_repair_MutS_sf"/>
</dbReference>
<dbReference type="InterPro" id="IPR007860">
    <property type="entry name" value="DNA_mmatch_repair_MutS_con_dom"/>
</dbReference>
<dbReference type="InterPro" id="IPR045076">
    <property type="entry name" value="MutS"/>
</dbReference>
<dbReference type="InterPro" id="IPR036678">
    <property type="entry name" value="MutS_con_dom_sf"/>
</dbReference>
<dbReference type="InterPro" id="IPR027417">
    <property type="entry name" value="P-loop_NTPase"/>
</dbReference>
<dbReference type="NCBIfam" id="TIGR01070">
    <property type="entry name" value="mutS1"/>
    <property type="match status" value="1"/>
</dbReference>
<dbReference type="NCBIfam" id="NF003810">
    <property type="entry name" value="PRK05399.1"/>
    <property type="match status" value="1"/>
</dbReference>
<dbReference type="PANTHER" id="PTHR11361:SF34">
    <property type="entry name" value="DNA MISMATCH REPAIR PROTEIN MSH1, MITOCHONDRIAL"/>
    <property type="match status" value="1"/>
</dbReference>
<dbReference type="PANTHER" id="PTHR11361">
    <property type="entry name" value="DNA MISMATCH REPAIR PROTEIN MUTS FAMILY MEMBER"/>
    <property type="match status" value="1"/>
</dbReference>
<dbReference type="Pfam" id="PF01624">
    <property type="entry name" value="MutS_I"/>
    <property type="match status" value="1"/>
</dbReference>
<dbReference type="Pfam" id="PF05188">
    <property type="entry name" value="MutS_II"/>
    <property type="match status" value="1"/>
</dbReference>
<dbReference type="Pfam" id="PF05192">
    <property type="entry name" value="MutS_III"/>
    <property type="match status" value="1"/>
</dbReference>
<dbReference type="Pfam" id="PF05190">
    <property type="entry name" value="MutS_IV"/>
    <property type="match status" value="1"/>
</dbReference>
<dbReference type="Pfam" id="PF00488">
    <property type="entry name" value="MutS_V"/>
    <property type="match status" value="1"/>
</dbReference>
<dbReference type="PIRSF" id="PIRSF037677">
    <property type="entry name" value="DNA_mis_repair_Msh6"/>
    <property type="match status" value="1"/>
</dbReference>
<dbReference type="SMART" id="SM00534">
    <property type="entry name" value="MUTSac"/>
    <property type="match status" value="1"/>
</dbReference>
<dbReference type="SMART" id="SM00533">
    <property type="entry name" value="MUTSd"/>
    <property type="match status" value="1"/>
</dbReference>
<dbReference type="SUPFAM" id="SSF55271">
    <property type="entry name" value="DNA repair protein MutS, domain I"/>
    <property type="match status" value="1"/>
</dbReference>
<dbReference type="SUPFAM" id="SSF53150">
    <property type="entry name" value="DNA repair protein MutS, domain II"/>
    <property type="match status" value="1"/>
</dbReference>
<dbReference type="SUPFAM" id="SSF48334">
    <property type="entry name" value="DNA repair protein MutS, domain III"/>
    <property type="match status" value="1"/>
</dbReference>
<dbReference type="SUPFAM" id="SSF52540">
    <property type="entry name" value="P-loop containing nucleoside triphosphate hydrolases"/>
    <property type="match status" value="1"/>
</dbReference>
<dbReference type="PROSITE" id="PS00486">
    <property type="entry name" value="DNA_MISMATCH_REPAIR_2"/>
    <property type="match status" value="1"/>
</dbReference>
<proteinExistence type="inferred from homology"/>